<name>B2MG_CEBAL</name>
<gene>
    <name type="primary">B2M</name>
</gene>
<accession>P63065</accession>
<accession>O77826</accession>
<sequence length="119" mass="13725">MARFVVAALLVLLCLSGLEAIQHAPKIQVYSRHPAENGKPNFLNCYVSGFHPSDIEVDLLKNGKKIEKVEHSDLSFSKDWSFYLLYYTEFTPNEKDEYACRVSHVTFPTPKTVKWDRNM</sequence>
<comment type="function">
    <text evidence="1">Component of the class I major histocompatibility complex (MHC). Involved in the presentation of peptide antigens to the immune system (By similarity).</text>
</comment>
<comment type="subunit">
    <text evidence="1">Heterodimer of an alpha chain and a beta chain. Beta-2-microglobulin is the beta-chain of major histocompatibility complex class I molecules (By similarity).</text>
</comment>
<comment type="subcellular location">
    <subcellularLocation>
        <location evidence="1">Secreted</location>
    </subcellularLocation>
</comment>
<comment type="similarity">
    <text evidence="3">Belongs to the beta-2-microglobulin family.</text>
</comment>
<feature type="signal peptide" evidence="1">
    <location>
        <begin position="1"/>
        <end position="20"/>
    </location>
</feature>
<feature type="chain" id="PRO_0000018771" description="Beta-2-microglobulin">
    <location>
        <begin position="21"/>
        <end position="119"/>
    </location>
</feature>
<feature type="domain" description="Ig-like C1-type">
    <location>
        <begin position="25"/>
        <end position="114"/>
    </location>
</feature>
<feature type="disulfide bond" evidence="2">
    <location>
        <begin position="45"/>
        <end position="100"/>
    </location>
</feature>
<reference key="1">
    <citation type="journal article" date="1998" name="Immunogenetics">
        <title>Beta-2-microglobulin in neotropical primates (Platyrrhini).</title>
        <authorList>
            <person name="Canavez F.C."/>
            <person name="Ladasky J.J."/>
            <person name="Muniz J.A.P.C."/>
            <person name="Seuanez H.N."/>
            <person name="Parham P."/>
        </authorList>
    </citation>
    <scope>NUCLEOTIDE SEQUENCE [GENOMIC DNA]</scope>
    <source>
        <tissue>Blood</tissue>
    </source>
</reference>
<dbReference type="EMBL" id="AF032022">
    <property type="protein sequence ID" value="AAC39795.1"/>
    <property type="molecule type" value="Genomic_DNA"/>
</dbReference>
<dbReference type="EMBL" id="AF032020">
    <property type="protein sequence ID" value="AAC39795.1"/>
    <property type="status" value="JOINED"/>
    <property type="molecule type" value="Genomic_DNA"/>
</dbReference>
<dbReference type="EMBL" id="AF032021">
    <property type="protein sequence ID" value="AAC39795.1"/>
    <property type="status" value="JOINED"/>
    <property type="molecule type" value="Genomic_DNA"/>
</dbReference>
<dbReference type="SMR" id="P63065"/>
<dbReference type="GO" id="GO:0005576">
    <property type="term" value="C:extracellular region"/>
    <property type="evidence" value="ECO:0007669"/>
    <property type="project" value="UniProtKB-SubCell"/>
</dbReference>
<dbReference type="GO" id="GO:0042612">
    <property type="term" value="C:MHC class I protein complex"/>
    <property type="evidence" value="ECO:0007669"/>
    <property type="project" value="UniProtKB-KW"/>
</dbReference>
<dbReference type="GO" id="GO:0002474">
    <property type="term" value="P:antigen processing and presentation of peptide antigen via MHC class I"/>
    <property type="evidence" value="ECO:0007669"/>
    <property type="project" value="UniProtKB-KW"/>
</dbReference>
<dbReference type="GO" id="GO:0006955">
    <property type="term" value="P:immune response"/>
    <property type="evidence" value="ECO:0007669"/>
    <property type="project" value="InterPro"/>
</dbReference>
<dbReference type="CDD" id="cd05770">
    <property type="entry name" value="IgC1_beta2m"/>
    <property type="match status" value="1"/>
</dbReference>
<dbReference type="FunFam" id="2.60.40.10:FF:001005">
    <property type="entry name" value="Beta-2-microglobulin"/>
    <property type="match status" value="1"/>
</dbReference>
<dbReference type="Gene3D" id="2.60.40.10">
    <property type="entry name" value="Immunoglobulins"/>
    <property type="match status" value="1"/>
</dbReference>
<dbReference type="InterPro" id="IPR015707">
    <property type="entry name" value="B2Microglobulin"/>
</dbReference>
<dbReference type="InterPro" id="IPR007110">
    <property type="entry name" value="Ig-like_dom"/>
</dbReference>
<dbReference type="InterPro" id="IPR036179">
    <property type="entry name" value="Ig-like_dom_sf"/>
</dbReference>
<dbReference type="InterPro" id="IPR013783">
    <property type="entry name" value="Ig-like_fold"/>
</dbReference>
<dbReference type="InterPro" id="IPR003006">
    <property type="entry name" value="Ig/MHC_CS"/>
</dbReference>
<dbReference type="InterPro" id="IPR003597">
    <property type="entry name" value="Ig_C1-set"/>
</dbReference>
<dbReference type="InterPro" id="IPR050160">
    <property type="entry name" value="MHC/Immunoglobulin"/>
</dbReference>
<dbReference type="PANTHER" id="PTHR19944:SF62">
    <property type="entry name" value="BETA-2-MICROGLOBULIN"/>
    <property type="match status" value="1"/>
</dbReference>
<dbReference type="PANTHER" id="PTHR19944">
    <property type="entry name" value="MHC CLASS II-RELATED"/>
    <property type="match status" value="1"/>
</dbReference>
<dbReference type="Pfam" id="PF07654">
    <property type="entry name" value="C1-set"/>
    <property type="match status" value="1"/>
</dbReference>
<dbReference type="SMART" id="SM00407">
    <property type="entry name" value="IGc1"/>
    <property type="match status" value="1"/>
</dbReference>
<dbReference type="SUPFAM" id="SSF48726">
    <property type="entry name" value="Immunoglobulin"/>
    <property type="match status" value="1"/>
</dbReference>
<dbReference type="PROSITE" id="PS50835">
    <property type="entry name" value="IG_LIKE"/>
    <property type="match status" value="1"/>
</dbReference>
<dbReference type="PROSITE" id="PS00290">
    <property type="entry name" value="IG_MHC"/>
    <property type="match status" value="1"/>
</dbReference>
<keyword id="KW-1015">Disulfide bond</keyword>
<keyword id="KW-0391">Immunity</keyword>
<keyword id="KW-0393">Immunoglobulin domain</keyword>
<keyword id="KW-0490">MHC I</keyword>
<keyword id="KW-0964">Secreted</keyword>
<keyword id="KW-0732">Signal</keyword>
<evidence type="ECO:0000250" key="1"/>
<evidence type="ECO:0000255" key="2">
    <source>
        <dbReference type="PROSITE-ProRule" id="PRU00114"/>
    </source>
</evidence>
<evidence type="ECO:0000305" key="3"/>
<organism>
    <name type="scientific">Cebus albifrons</name>
    <name type="common">White-fronted capuchin</name>
    <dbReference type="NCBI Taxonomy" id="9514"/>
    <lineage>
        <taxon>Eukaryota</taxon>
        <taxon>Metazoa</taxon>
        <taxon>Chordata</taxon>
        <taxon>Craniata</taxon>
        <taxon>Vertebrata</taxon>
        <taxon>Euteleostomi</taxon>
        <taxon>Mammalia</taxon>
        <taxon>Eutheria</taxon>
        <taxon>Euarchontoglires</taxon>
        <taxon>Primates</taxon>
        <taxon>Haplorrhini</taxon>
        <taxon>Platyrrhini</taxon>
        <taxon>Cebidae</taxon>
        <taxon>Cebinae</taxon>
        <taxon>Cebus</taxon>
    </lineage>
</organism>
<proteinExistence type="inferred from homology"/>
<protein>
    <recommendedName>
        <fullName>Beta-2-microglobulin</fullName>
    </recommendedName>
</protein>